<feature type="chain" id="PRO_0000372321" description="Ent-cassa-12,15-diene synthase">
    <location>
        <begin position="1"/>
        <end position="830"/>
    </location>
</feature>
<feature type="region of interest" description="Disordered" evidence="2">
    <location>
        <begin position="1"/>
        <end position="50"/>
    </location>
</feature>
<feature type="short sequence motif" description="DDXXD motif">
    <location>
        <begin position="577"/>
        <end position="581"/>
    </location>
</feature>
<feature type="compositionally biased region" description="Polar residues" evidence="2">
    <location>
        <begin position="23"/>
        <end position="37"/>
    </location>
</feature>
<feature type="binding site" evidence="1">
    <location>
        <position position="577"/>
    </location>
    <ligand>
        <name>Mg(2+)</name>
        <dbReference type="ChEBI" id="CHEBI:18420"/>
        <label>1</label>
    </ligand>
</feature>
<feature type="binding site" evidence="1">
    <location>
        <position position="577"/>
    </location>
    <ligand>
        <name>Mg(2+)</name>
        <dbReference type="ChEBI" id="CHEBI:18420"/>
        <label>2</label>
    </ligand>
</feature>
<feature type="binding site" evidence="1">
    <location>
        <position position="581"/>
    </location>
    <ligand>
        <name>Mg(2+)</name>
        <dbReference type="ChEBI" id="CHEBI:18420"/>
        <label>1</label>
    </ligand>
</feature>
<feature type="binding site" evidence="1">
    <location>
        <position position="581"/>
    </location>
    <ligand>
        <name>Mg(2+)</name>
        <dbReference type="ChEBI" id="CHEBI:18420"/>
        <label>2</label>
    </ligand>
</feature>
<feature type="binding site" evidence="1">
    <location>
        <position position="721"/>
    </location>
    <ligand>
        <name>Mg(2+)</name>
        <dbReference type="ChEBI" id="CHEBI:18420"/>
        <label>3</label>
    </ligand>
</feature>
<feature type="binding site" evidence="1">
    <location>
        <position position="729"/>
    </location>
    <ligand>
        <name>Mg(2+)</name>
        <dbReference type="ChEBI" id="CHEBI:18420"/>
        <label>3</label>
    </ligand>
</feature>
<feature type="sequence conflict" description="In Ref. 1; ABH10734." evidence="4" ref="1">
    <original>S</original>
    <variation>L</variation>
    <location>
        <position position="829"/>
    </location>
</feature>
<dbReference type="EC" id="4.2.3.28"/>
<dbReference type="EMBL" id="DQ823354">
    <property type="protein sequence ID" value="ABH10734.1"/>
    <property type="molecule type" value="mRNA"/>
</dbReference>
<dbReference type="EMBL" id="CM000127">
    <property type="protein sequence ID" value="EAY86361.1"/>
    <property type="status" value="ALT_INIT"/>
    <property type="molecule type" value="Genomic_DNA"/>
</dbReference>
<dbReference type="SMR" id="Q00G37"/>
<dbReference type="STRING" id="39946.Q00G37"/>
<dbReference type="HOGENOM" id="CLU_003125_2_0_1"/>
<dbReference type="Proteomes" id="UP000007015">
    <property type="component" value="Chromosome 2"/>
</dbReference>
<dbReference type="GO" id="GO:0034277">
    <property type="term" value="F:ent-cassa-12,15-diene synthase activity"/>
    <property type="evidence" value="ECO:0007669"/>
    <property type="project" value="UniProtKB-EC"/>
</dbReference>
<dbReference type="GO" id="GO:0000287">
    <property type="term" value="F:magnesium ion binding"/>
    <property type="evidence" value="ECO:0007669"/>
    <property type="project" value="InterPro"/>
</dbReference>
<dbReference type="GO" id="GO:0010333">
    <property type="term" value="F:terpene synthase activity"/>
    <property type="evidence" value="ECO:0007669"/>
    <property type="project" value="InterPro"/>
</dbReference>
<dbReference type="GO" id="GO:0006952">
    <property type="term" value="P:defense response"/>
    <property type="evidence" value="ECO:0007669"/>
    <property type="project" value="UniProtKB-KW"/>
</dbReference>
<dbReference type="GO" id="GO:0016102">
    <property type="term" value="P:diterpenoid biosynthetic process"/>
    <property type="evidence" value="ECO:0007669"/>
    <property type="project" value="InterPro"/>
</dbReference>
<dbReference type="CDD" id="cd00684">
    <property type="entry name" value="Terpene_cyclase_plant_C1"/>
    <property type="match status" value="1"/>
</dbReference>
<dbReference type="FunFam" id="1.50.10.160:FF:000002">
    <property type="entry name" value="cis-abienol synthase, chloroplastic"/>
    <property type="match status" value="1"/>
</dbReference>
<dbReference type="FunFam" id="1.50.10.130:FF:000003">
    <property type="entry name" value="Ent-cassa-12,15-diene synthase"/>
    <property type="match status" value="1"/>
</dbReference>
<dbReference type="FunFam" id="1.10.600.10:FF:000005">
    <property type="entry name" value="Ent-kaur-16-ene synthase, chloroplastic"/>
    <property type="match status" value="1"/>
</dbReference>
<dbReference type="Gene3D" id="1.50.10.160">
    <property type="match status" value="1"/>
</dbReference>
<dbReference type="Gene3D" id="1.10.600.10">
    <property type="entry name" value="Farnesyl Diphosphate Synthase"/>
    <property type="match status" value="1"/>
</dbReference>
<dbReference type="Gene3D" id="1.50.10.130">
    <property type="entry name" value="Terpene synthase, N-terminal domain"/>
    <property type="match status" value="1"/>
</dbReference>
<dbReference type="InterPro" id="IPR008949">
    <property type="entry name" value="Isoprenoid_synthase_dom_sf"/>
</dbReference>
<dbReference type="InterPro" id="IPR044814">
    <property type="entry name" value="Terpene_cyclase_plant_C1"/>
</dbReference>
<dbReference type="InterPro" id="IPR001906">
    <property type="entry name" value="Terpene_synth_N"/>
</dbReference>
<dbReference type="InterPro" id="IPR036965">
    <property type="entry name" value="Terpene_synth_N_sf"/>
</dbReference>
<dbReference type="InterPro" id="IPR050148">
    <property type="entry name" value="Terpene_synthase-like"/>
</dbReference>
<dbReference type="InterPro" id="IPR005630">
    <property type="entry name" value="Terpene_synthase_metal-bd"/>
</dbReference>
<dbReference type="InterPro" id="IPR008930">
    <property type="entry name" value="Terpenoid_cyclase/PrenylTrfase"/>
</dbReference>
<dbReference type="PANTHER" id="PTHR31739">
    <property type="entry name" value="ENT-COPALYL DIPHOSPHATE SYNTHASE, CHLOROPLASTIC"/>
    <property type="match status" value="1"/>
</dbReference>
<dbReference type="PANTHER" id="PTHR31739:SF3">
    <property type="entry name" value="ENT-KAUR-16-ENE SYNTHASE, CHLOROPLASTIC"/>
    <property type="match status" value="1"/>
</dbReference>
<dbReference type="Pfam" id="PF01397">
    <property type="entry name" value="Terpene_synth"/>
    <property type="match status" value="1"/>
</dbReference>
<dbReference type="Pfam" id="PF03936">
    <property type="entry name" value="Terpene_synth_C"/>
    <property type="match status" value="1"/>
</dbReference>
<dbReference type="SFLD" id="SFLDG01014">
    <property type="entry name" value="Terpene_Cyclase_Like_1_N-term"/>
    <property type="match status" value="1"/>
</dbReference>
<dbReference type="SUPFAM" id="SSF48239">
    <property type="entry name" value="Terpenoid cyclases/Protein prenyltransferases"/>
    <property type="match status" value="2"/>
</dbReference>
<dbReference type="SUPFAM" id="SSF48576">
    <property type="entry name" value="Terpenoid synthases"/>
    <property type="match status" value="1"/>
</dbReference>
<protein>
    <recommendedName>
        <fullName>Ent-cassa-12,15-diene synthase</fullName>
        <ecNumber>4.2.3.28</ecNumber>
    </recommendedName>
    <alternativeName>
        <fullName>Diterpene cyclase 1</fullName>
        <shortName>OsDTC1</shortName>
    </alternativeName>
    <alternativeName>
        <fullName>Ent-kaurene synthase-like 7</fullName>
        <shortName>OsKSL7</shortName>
    </alternativeName>
</protein>
<accession>Q00G37</accession>
<accession>A2X6A1</accession>
<keyword id="KW-0456">Lyase</keyword>
<keyword id="KW-0460">Magnesium</keyword>
<keyword id="KW-0479">Metal-binding</keyword>
<keyword id="KW-0611">Plant defense</keyword>
<keyword id="KW-1185">Reference proteome</keyword>
<gene>
    <name type="primary">KSL7</name>
    <name type="synonym">DTC1</name>
    <name type="ORF">OsI_007594</name>
</gene>
<reference key="1">
    <citation type="journal article" date="2006" name="Phytochemistry">
        <title>Uncovering the complex metabolic network underlying diterpenoid phytoalexin biosynthesis in rice and other cereal crop plants.</title>
        <authorList>
            <person name="Peters R.J."/>
        </authorList>
    </citation>
    <scope>NUCLEOTIDE SEQUENCE [MRNA]</scope>
    <source>
        <strain>cv. IR24</strain>
    </source>
</reference>
<reference key="2">
    <citation type="journal article" date="2005" name="PLoS Biol.">
        <title>The genomes of Oryza sativa: a history of duplications.</title>
        <authorList>
            <person name="Yu J."/>
            <person name="Wang J."/>
            <person name="Lin W."/>
            <person name="Li S."/>
            <person name="Li H."/>
            <person name="Zhou J."/>
            <person name="Ni P."/>
            <person name="Dong W."/>
            <person name="Hu S."/>
            <person name="Zeng C."/>
            <person name="Zhang J."/>
            <person name="Zhang Y."/>
            <person name="Li R."/>
            <person name="Xu Z."/>
            <person name="Li S."/>
            <person name="Li X."/>
            <person name="Zheng H."/>
            <person name="Cong L."/>
            <person name="Lin L."/>
            <person name="Yin J."/>
            <person name="Geng J."/>
            <person name="Li G."/>
            <person name="Shi J."/>
            <person name="Liu J."/>
            <person name="Lv H."/>
            <person name="Li J."/>
            <person name="Wang J."/>
            <person name="Deng Y."/>
            <person name="Ran L."/>
            <person name="Shi X."/>
            <person name="Wang X."/>
            <person name="Wu Q."/>
            <person name="Li C."/>
            <person name="Ren X."/>
            <person name="Wang J."/>
            <person name="Wang X."/>
            <person name="Li D."/>
            <person name="Liu D."/>
            <person name="Zhang X."/>
            <person name="Ji Z."/>
            <person name="Zhao W."/>
            <person name="Sun Y."/>
            <person name="Zhang Z."/>
            <person name="Bao J."/>
            <person name="Han Y."/>
            <person name="Dong L."/>
            <person name="Ji J."/>
            <person name="Chen P."/>
            <person name="Wu S."/>
            <person name="Liu J."/>
            <person name="Xiao Y."/>
            <person name="Bu D."/>
            <person name="Tan J."/>
            <person name="Yang L."/>
            <person name="Ye C."/>
            <person name="Zhang J."/>
            <person name="Xu J."/>
            <person name="Zhou Y."/>
            <person name="Yu Y."/>
            <person name="Zhang B."/>
            <person name="Zhuang S."/>
            <person name="Wei H."/>
            <person name="Liu B."/>
            <person name="Lei M."/>
            <person name="Yu H."/>
            <person name="Li Y."/>
            <person name="Xu H."/>
            <person name="Wei S."/>
            <person name="He X."/>
            <person name="Fang L."/>
            <person name="Zhang Z."/>
            <person name="Zhang Y."/>
            <person name="Huang X."/>
            <person name="Su Z."/>
            <person name="Tong W."/>
            <person name="Li J."/>
            <person name="Tong Z."/>
            <person name="Li S."/>
            <person name="Ye J."/>
            <person name="Wang L."/>
            <person name="Fang L."/>
            <person name="Lei T."/>
            <person name="Chen C.-S."/>
            <person name="Chen H.-C."/>
            <person name="Xu Z."/>
            <person name="Li H."/>
            <person name="Huang H."/>
            <person name="Zhang F."/>
            <person name="Xu H."/>
            <person name="Li N."/>
            <person name="Zhao C."/>
            <person name="Li S."/>
            <person name="Dong L."/>
            <person name="Huang Y."/>
            <person name="Li L."/>
            <person name="Xi Y."/>
            <person name="Qi Q."/>
            <person name="Li W."/>
            <person name="Zhang B."/>
            <person name="Hu W."/>
            <person name="Zhang Y."/>
            <person name="Tian X."/>
            <person name="Jiao Y."/>
            <person name="Liang X."/>
            <person name="Jin J."/>
            <person name="Gao L."/>
            <person name="Zheng W."/>
            <person name="Hao B."/>
            <person name="Liu S.-M."/>
            <person name="Wang W."/>
            <person name="Yuan L."/>
            <person name="Cao M."/>
            <person name="McDermott J."/>
            <person name="Samudrala R."/>
            <person name="Wang J."/>
            <person name="Wong G.K.-S."/>
            <person name="Yang H."/>
        </authorList>
    </citation>
    <scope>NUCLEOTIDE SEQUENCE [LARGE SCALE GENOMIC DNA]</scope>
    <source>
        <strain>cv. 93-11</strain>
    </source>
</reference>
<reference key="3">
    <citation type="journal article" date="2007" name="Phytochemistry">
        <title>Functional characterization of the rice kaurene synthase-like gene family.</title>
        <authorList>
            <person name="Xu M."/>
            <person name="Wilderman P.R."/>
            <person name="Morrone D."/>
            <person name="Xu J."/>
            <person name="Roy A."/>
            <person name="Margis-Pinheiro M."/>
            <person name="Upadhyaya N.M."/>
            <person name="Coates R.M."/>
            <person name="Peters R.J."/>
        </authorList>
    </citation>
    <scope>FUNCTION</scope>
</reference>
<sequence>MMLLGSPSSGGYGGKFAGASPAGGTTTMAPSAKQPSSRAPPPGITGGRNDLRILSPAAAAAAVGGLEMKKPEAEGIAESLQATHRKELEASIRKQLQGVELSPSPYDTAWVAMVPLRGSSHNPSFPQCVDWILENQWDDGSWSIDGSISTANKDVLSSTLACVLALNKWNVGREHIRRGLSFIGRNFSIAMDDQAVAPIGFGITFPAMLTLANGSGLEVPVRQNDIDSLNHLREMKIQREAGNHSRGRKAYMAYLAEGFGNLLEWDEIMMFQRKNGSLFNCPSSTAGALANYHDDKALQYLQSLVNKFDGVVPTLYPLNIYCQLSMVDALENMGISQYFASEIKSILDMTYSSWLGRDEEIMLDVTTCAMAFRLLRMNGYDVSSDELSHVAGASGFRDSLQGYLNDRKSVLEVYKTSKHSISENDLILDSIGSWSGSLLKEMLCSNGIQGTPGREEIEFALKYPFYSTLERLVHRKNIVLFDAKGSQMLKTECMPVHDSQDFLALAVDDFCISQSNYQNELNYLESWVKDNRLDQLHFARQKITYCYLSGAATTFRPEMGYARTSWARTAWLTAVIDDLFDVGGLEQEQENLLALMEKWEEPGEDEYYSEDVKIVFQALYNTVNEIGAKASALQGHDVTKYLVDVWLHVVRCMKVEAEWQRSQHLPTFEEYMESGMVSLGQGATVMSALFLIGEKLPEGVVELEEYDEMFRLMGTCGRLLNDIRGIEREESDGKMTNGVSLLVHASGGSMSVDEAKTEVMKRIDASRRKLLSLVVGEQEGPIPRPCKQLFWKMCKILHLFYYQTDGFSSPKEMVSAVDAVIKEPLQLRSL</sequence>
<proteinExistence type="evidence at transcript level"/>
<comment type="function">
    <text evidence="3">Involved in phytocassane phytoalexins biosynthesis. Catalyzes the conversion of ent-copalyl diphosphate to the phytoalexin precursor ent-cassa-12,15-diene.</text>
</comment>
<comment type="catalytic activity">
    <reaction>
        <text>ent-copalyl diphosphate = ent-cassa-12,15-diene + diphosphate</text>
        <dbReference type="Rhea" id="RHEA:25532"/>
        <dbReference type="ChEBI" id="CHEBI:33019"/>
        <dbReference type="ChEBI" id="CHEBI:50060"/>
        <dbReference type="ChEBI" id="CHEBI:58553"/>
        <dbReference type="EC" id="4.2.3.28"/>
    </reaction>
</comment>
<comment type="cofactor">
    <cofactor evidence="1">
        <name>Mg(2+)</name>
        <dbReference type="ChEBI" id="CHEBI:18420"/>
    </cofactor>
    <text evidence="1">Binds 3 Mg(2+) ions per subunit.</text>
</comment>
<comment type="tissue specificity">
    <text>Expressed in roots and stems.</text>
</comment>
<comment type="developmental stage">
    <text>Expressed from 2 to 6 days after imbibition.</text>
</comment>
<comment type="induction">
    <text>By chitin oligosaccharide elicitor and UV irradiation.</text>
</comment>
<comment type="domain">
    <text>The Asp-Asp-Xaa-Xaa-Asp/Glu (DDXXD/E) motif is important for the catalytic activity, presumably through binding to Mg(2+).</text>
</comment>
<comment type="miscellaneous">
    <text>Ent-cassa-12,15-diene is a precursor of the phytoalexins phytocassanes A-E. Phytoalexins are diterpenoid secondary metabolites involved in the defense mechanism of the plant and produced in response to attack (by a pathogen, elicitor or UV irradiation).</text>
</comment>
<comment type="similarity">
    <text evidence="4">Belongs to the terpene synthase family.</text>
</comment>
<comment type="sequence caution" evidence="4">
    <conflict type="erroneous initiation">
        <sequence resource="EMBL-CDS" id="EAY86361"/>
    </conflict>
</comment>
<evidence type="ECO:0000250" key="1"/>
<evidence type="ECO:0000256" key="2">
    <source>
        <dbReference type="SAM" id="MobiDB-lite"/>
    </source>
</evidence>
<evidence type="ECO:0000269" key="3">
    <source>
    </source>
</evidence>
<evidence type="ECO:0000305" key="4"/>
<organism>
    <name type="scientific">Oryza sativa subsp. indica</name>
    <name type="common">Rice</name>
    <dbReference type="NCBI Taxonomy" id="39946"/>
    <lineage>
        <taxon>Eukaryota</taxon>
        <taxon>Viridiplantae</taxon>
        <taxon>Streptophyta</taxon>
        <taxon>Embryophyta</taxon>
        <taxon>Tracheophyta</taxon>
        <taxon>Spermatophyta</taxon>
        <taxon>Magnoliopsida</taxon>
        <taxon>Liliopsida</taxon>
        <taxon>Poales</taxon>
        <taxon>Poaceae</taxon>
        <taxon>BOP clade</taxon>
        <taxon>Oryzoideae</taxon>
        <taxon>Oryzeae</taxon>
        <taxon>Oryzinae</taxon>
        <taxon>Oryza</taxon>
        <taxon>Oryza sativa</taxon>
    </lineage>
</organism>
<name>KSL7_ORYSI</name>